<name>GSHB_THEVB</name>
<comment type="catalytic activity">
    <reaction evidence="2">
        <text>gamma-L-glutamyl-L-cysteine + glycine + ATP = glutathione + ADP + phosphate + H(+)</text>
        <dbReference type="Rhea" id="RHEA:13557"/>
        <dbReference type="ChEBI" id="CHEBI:15378"/>
        <dbReference type="ChEBI" id="CHEBI:30616"/>
        <dbReference type="ChEBI" id="CHEBI:43474"/>
        <dbReference type="ChEBI" id="CHEBI:57305"/>
        <dbReference type="ChEBI" id="CHEBI:57925"/>
        <dbReference type="ChEBI" id="CHEBI:58173"/>
        <dbReference type="ChEBI" id="CHEBI:456216"/>
        <dbReference type="EC" id="6.3.2.3"/>
    </reaction>
</comment>
<comment type="cofactor">
    <cofactor evidence="1">
        <name>Mg(2+)</name>
        <dbReference type="ChEBI" id="CHEBI:18420"/>
    </cofactor>
    <cofactor evidence="1">
        <name>Mn(2+)</name>
        <dbReference type="ChEBI" id="CHEBI:29035"/>
    </cofactor>
    <text evidence="1">Binds 1 Mg(2+) or Mn(2+) ion per subunit.</text>
</comment>
<comment type="pathway">
    <text evidence="2">Sulfur metabolism; glutathione biosynthesis; glutathione from L-cysteine and L-glutamate: step 2/2.</text>
</comment>
<comment type="similarity">
    <text evidence="2">Belongs to the prokaryotic GSH synthase family.</text>
</comment>
<sequence>MDIAFIIDPIASLDPGHDTSVALMEAAQAAGARVWVTEISQLLIREGQVWAALTPIQLSPVQLVDGQWQIPQPWFELGALEWRPLNTFRAVWMRKDPPVNTAYLYATYCLDLVDPQTTLVLNSPAGLRHANEKMYALQFTSVIPKTIVTADKQRIREFVQQQGMAVLKPLGGKGGEGILFLQAGDRNLNSMIEISTQRGQLPVMLQEYLPAAKEGDKRIILLNGEPIGAVNRIPTGDEFRGNMATGGRVAAAEITERDRQICQTLAPALRRDGLYFVGIDVIGGYLTEVNVTSPTGVREIDRLNGTRLGQQVMAWLFS</sequence>
<proteinExistence type="inferred from homology"/>
<organism>
    <name type="scientific">Thermosynechococcus vestitus (strain NIES-2133 / IAM M-273 / BP-1)</name>
    <dbReference type="NCBI Taxonomy" id="197221"/>
    <lineage>
        <taxon>Bacteria</taxon>
        <taxon>Bacillati</taxon>
        <taxon>Cyanobacteriota</taxon>
        <taxon>Cyanophyceae</taxon>
        <taxon>Acaryochloridales</taxon>
        <taxon>Thermosynechococcaceae</taxon>
        <taxon>Thermosynechococcus</taxon>
    </lineage>
</organism>
<keyword id="KW-0067">ATP-binding</keyword>
<keyword id="KW-0317">Glutathione biosynthesis</keyword>
<keyword id="KW-0436">Ligase</keyword>
<keyword id="KW-0460">Magnesium</keyword>
<keyword id="KW-0464">Manganese</keyword>
<keyword id="KW-0479">Metal-binding</keyword>
<keyword id="KW-0547">Nucleotide-binding</keyword>
<keyword id="KW-1185">Reference proteome</keyword>
<evidence type="ECO:0000250" key="1"/>
<evidence type="ECO:0000255" key="2">
    <source>
        <dbReference type="HAMAP-Rule" id="MF_00162"/>
    </source>
</evidence>
<protein>
    <recommendedName>
        <fullName evidence="2">Glutathione synthetase</fullName>
        <ecNumber evidence="2">6.3.2.3</ecNumber>
    </recommendedName>
    <alternativeName>
        <fullName evidence="2">GSH synthetase</fullName>
        <shortName evidence="2">GSH-S</shortName>
        <shortName evidence="2">GSHase</shortName>
    </alternativeName>
    <alternativeName>
        <fullName evidence="2">Glutathione synthase</fullName>
    </alternativeName>
</protein>
<gene>
    <name evidence="2" type="primary">gshB</name>
    <name type="ordered locus">tlr0908</name>
</gene>
<reference key="1">
    <citation type="journal article" date="2002" name="DNA Res.">
        <title>Complete genome structure of the thermophilic cyanobacterium Thermosynechococcus elongatus BP-1.</title>
        <authorList>
            <person name="Nakamura Y."/>
            <person name="Kaneko T."/>
            <person name="Sato S."/>
            <person name="Ikeuchi M."/>
            <person name="Katoh H."/>
            <person name="Sasamoto S."/>
            <person name="Watanabe A."/>
            <person name="Iriguchi M."/>
            <person name="Kawashima K."/>
            <person name="Kimura T."/>
            <person name="Kishida Y."/>
            <person name="Kiyokawa C."/>
            <person name="Kohara M."/>
            <person name="Matsumoto M."/>
            <person name="Matsuno A."/>
            <person name="Nakazaki N."/>
            <person name="Shimpo S."/>
            <person name="Sugimoto M."/>
            <person name="Takeuchi C."/>
            <person name="Yamada M."/>
            <person name="Tabata S."/>
        </authorList>
    </citation>
    <scope>NUCLEOTIDE SEQUENCE [LARGE SCALE GENOMIC DNA]</scope>
    <source>
        <strain>NIES-2133 / IAM M-273 / BP-1</strain>
    </source>
</reference>
<dbReference type="EC" id="6.3.2.3" evidence="2"/>
<dbReference type="EMBL" id="BA000039">
    <property type="protein sequence ID" value="BAC08460.1"/>
    <property type="molecule type" value="Genomic_DNA"/>
</dbReference>
<dbReference type="RefSeq" id="NP_681698.1">
    <property type="nucleotide sequence ID" value="NC_004113.1"/>
</dbReference>
<dbReference type="RefSeq" id="WP_011056752.1">
    <property type="nucleotide sequence ID" value="NC_004113.1"/>
</dbReference>
<dbReference type="SMR" id="Q8DKF1"/>
<dbReference type="STRING" id="197221.gene:10747500"/>
<dbReference type="EnsemblBacteria" id="BAC08460">
    <property type="protein sequence ID" value="BAC08460"/>
    <property type="gene ID" value="BAC08460"/>
</dbReference>
<dbReference type="KEGG" id="tel:tlr0908"/>
<dbReference type="PATRIC" id="fig|197221.4.peg.954"/>
<dbReference type="eggNOG" id="COG0189">
    <property type="taxonomic scope" value="Bacteria"/>
</dbReference>
<dbReference type="UniPathway" id="UPA00142">
    <property type="reaction ID" value="UER00210"/>
</dbReference>
<dbReference type="Proteomes" id="UP000000440">
    <property type="component" value="Chromosome"/>
</dbReference>
<dbReference type="GO" id="GO:0005737">
    <property type="term" value="C:cytoplasm"/>
    <property type="evidence" value="ECO:0007669"/>
    <property type="project" value="TreeGrafter"/>
</dbReference>
<dbReference type="GO" id="GO:0005524">
    <property type="term" value="F:ATP binding"/>
    <property type="evidence" value="ECO:0007669"/>
    <property type="project" value="UniProtKB-UniRule"/>
</dbReference>
<dbReference type="GO" id="GO:0004363">
    <property type="term" value="F:glutathione synthase activity"/>
    <property type="evidence" value="ECO:0007669"/>
    <property type="project" value="UniProtKB-UniRule"/>
</dbReference>
<dbReference type="GO" id="GO:0046872">
    <property type="term" value="F:metal ion binding"/>
    <property type="evidence" value="ECO:0007669"/>
    <property type="project" value="UniProtKB-KW"/>
</dbReference>
<dbReference type="Gene3D" id="3.40.50.20">
    <property type="match status" value="1"/>
</dbReference>
<dbReference type="Gene3D" id="3.30.1490.20">
    <property type="entry name" value="ATP-grasp fold, A domain"/>
    <property type="match status" value="1"/>
</dbReference>
<dbReference type="Gene3D" id="3.30.470.20">
    <property type="entry name" value="ATP-grasp fold, B domain"/>
    <property type="match status" value="1"/>
</dbReference>
<dbReference type="HAMAP" id="MF_00162">
    <property type="entry name" value="GSH_S"/>
    <property type="match status" value="1"/>
</dbReference>
<dbReference type="InterPro" id="IPR011761">
    <property type="entry name" value="ATP-grasp"/>
</dbReference>
<dbReference type="InterPro" id="IPR013815">
    <property type="entry name" value="ATP_grasp_subdomain_1"/>
</dbReference>
<dbReference type="InterPro" id="IPR006284">
    <property type="entry name" value="Glut_synth_pro"/>
</dbReference>
<dbReference type="InterPro" id="IPR004218">
    <property type="entry name" value="GSHS_ATP-bd"/>
</dbReference>
<dbReference type="InterPro" id="IPR004215">
    <property type="entry name" value="GSHS_N"/>
</dbReference>
<dbReference type="InterPro" id="IPR016185">
    <property type="entry name" value="PreATP-grasp_dom_sf"/>
</dbReference>
<dbReference type="NCBIfam" id="TIGR01380">
    <property type="entry name" value="glut_syn"/>
    <property type="match status" value="1"/>
</dbReference>
<dbReference type="NCBIfam" id="NF003573">
    <property type="entry name" value="PRK05246.1"/>
    <property type="match status" value="1"/>
</dbReference>
<dbReference type="PANTHER" id="PTHR21621:SF4">
    <property type="entry name" value="GLUTATHIONE SYNTHETASE"/>
    <property type="match status" value="1"/>
</dbReference>
<dbReference type="PANTHER" id="PTHR21621">
    <property type="entry name" value="RIBOSOMAL PROTEIN S6 MODIFICATION PROTEIN"/>
    <property type="match status" value="1"/>
</dbReference>
<dbReference type="Pfam" id="PF02955">
    <property type="entry name" value="GSH-S_ATP"/>
    <property type="match status" value="1"/>
</dbReference>
<dbReference type="Pfam" id="PF02951">
    <property type="entry name" value="GSH-S_N"/>
    <property type="match status" value="1"/>
</dbReference>
<dbReference type="SUPFAM" id="SSF56059">
    <property type="entry name" value="Glutathione synthetase ATP-binding domain-like"/>
    <property type="match status" value="1"/>
</dbReference>
<dbReference type="SUPFAM" id="SSF52440">
    <property type="entry name" value="PreATP-grasp domain"/>
    <property type="match status" value="1"/>
</dbReference>
<dbReference type="PROSITE" id="PS50975">
    <property type="entry name" value="ATP_GRASP"/>
    <property type="match status" value="1"/>
</dbReference>
<feature type="chain" id="PRO_0000197487" description="Glutathione synthetase">
    <location>
        <begin position="1"/>
        <end position="318"/>
    </location>
</feature>
<feature type="domain" description="ATP-grasp" evidence="2">
    <location>
        <begin position="133"/>
        <end position="317"/>
    </location>
</feature>
<feature type="binding site" evidence="2">
    <location>
        <begin position="159"/>
        <end position="215"/>
    </location>
    <ligand>
        <name>ATP</name>
        <dbReference type="ChEBI" id="CHEBI:30616"/>
    </ligand>
</feature>
<feature type="binding site" evidence="2">
    <location>
        <position position="288"/>
    </location>
    <ligand>
        <name>Mg(2+)</name>
        <dbReference type="ChEBI" id="CHEBI:18420"/>
    </ligand>
</feature>
<feature type="binding site" evidence="2">
    <location>
        <position position="290"/>
    </location>
    <ligand>
        <name>Mg(2+)</name>
        <dbReference type="ChEBI" id="CHEBI:18420"/>
    </ligand>
</feature>
<accession>Q8DKF1</accession>